<organism>
    <name type="scientific">Escherichia coli O157:H7</name>
    <dbReference type="NCBI Taxonomy" id="83334"/>
    <lineage>
        <taxon>Bacteria</taxon>
        <taxon>Pseudomonadati</taxon>
        <taxon>Pseudomonadota</taxon>
        <taxon>Gammaproteobacteria</taxon>
        <taxon>Enterobacterales</taxon>
        <taxon>Enterobacteriaceae</taxon>
        <taxon>Escherichia</taxon>
    </lineage>
</organism>
<feature type="chain" id="PRO_0000168992" description="Uncharacterized protein YdiH">
    <location>
        <begin position="1"/>
        <end position="62"/>
    </location>
</feature>
<protein>
    <recommendedName>
        <fullName>Uncharacterized protein YdiH</fullName>
    </recommendedName>
</protein>
<gene>
    <name type="primary">ydiH</name>
    <name type="ordered locus">Z2713</name>
    <name type="ordered locus">ECs2392</name>
</gene>
<evidence type="ECO:0000305" key="1"/>
<dbReference type="EMBL" id="AE005174">
    <property type="protein sequence ID" value="AAG56672.1"/>
    <property type="status" value="ALT_INIT"/>
    <property type="molecule type" value="Genomic_DNA"/>
</dbReference>
<dbReference type="EMBL" id="BA000007">
    <property type="protein sequence ID" value="BAB35815.2"/>
    <property type="molecule type" value="Genomic_DNA"/>
</dbReference>
<dbReference type="PIR" id="D85776">
    <property type="entry name" value="D85776"/>
</dbReference>
<dbReference type="PIR" id="H90927">
    <property type="entry name" value="H90927"/>
</dbReference>
<dbReference type="RefSeq" id="NP_310419.1">
    <property type="nucleotide sequence ID" value="NC_002695.1"/>
</dbReference>
<dbReference type="RefSeq" id="WP_001296104.1">
    <property type="nucleotide sequence ID" value="NZ_VOAI01000007.1"/>
</dbReference>
<dbReference type="SMR" id="P64477"/>
<dbReference type="STRING" id="155864.Z2713"/>
<dbReference type="GeneID" id="914135"/>
<dbReference type="KEGG" id="ece:Z2713"/>
<dbReference type="KEGG" id="ecs:ECs_2392"/>
<dbReference type="PATRIC" id="fig|386585.9.peg.2505"/>
<dbReference type="HOGENOM" id="CLU_179884_0_0_6"/>
<dbReference type="OMA" id="WRLGVHV"/>
<dbReference type="Proteomes" id="UP000000558">
    <property type="component" value="Chromosome"/>
</dbReference>
<dbReference type="Proteomes" id="UP000002519">
    <property type="component" value="Chromosome"/>
</dbReference>
<dbReference type="InterPro" id="IPR031830">
    <property type="entry name" value="YdiH"/>
</dbReference>
<dbReference type="Pfam" id="PF15930">
    <property type="entry name" value="YdiH"/>
    <property type="match status" value="1"/>
</dbReference>
<sequence>MSTQLDPTQLAIEFLRRDQSNLSPAQYLKRLKQLELEFADLLTLSSAELKEEIYFAWRLGVH</sequence>
<proteinExistence type="predicted"/>
<name>YDIH_ECO57</name>
<keyword id="KW-1185">Reference proteome</keyword>
<reference key="1">
    <citation type="journal article" date="2001" name="Nature">
        <title>Genome sequence of enterohaemorrhagic Escherichia coli O157:H7.</title>
        <authorList>
            <person name="Perna N.T."/>
            <person name="Plunkett G. III"/>
            <person name="Burland V."/>
            <person name="Mau B."/>
            <person name="Glasner J.D."/>
            <person name="Rose D.J."/>
            <person name="Mayhew G.F."/>
            <person name="Evans P.S."/>
            <person name="Gregor J."/>
            <person name="Kirkpatrick H.A."/>
            <person name="Posfai G."/>
            <person name="Hackett J."/>
            <person name="Klink S."/>
            <person name="Boutin A."/>
            <person name="Shao Y."/>
            <person name="Miller L."/>
            <person name="Grotbeck E.J."/>
            <person name="Davis N.W."/>
            <person name="Lim A."/>
            <person name="Dimalanta E.T."/>
            <person name="Potamousis K."/>
            <person name="Apodaca J."/>
            <person name="Anantharaman T.S."/>
            <person name="Lin J."/>
            <person name="Yen G."/>
            <person name="Schwartz D.C."/>
            <person name="Welch R.A."/>
            <person name="Blattner F.R."/>
        </authorList>
    </citation>
    <scope>NUCLEOTIDE SEQUENCE [LARGE SCALE GENOMIC DNA]</scope>
    <source>
        <strain>O157:H7 / EDL933 / ATCC 700927 / EHEC</strain>
    </source>
</reference>
<reference key="2">
    <citation type="journal article" date="2001" name="DNA Res.">
        <title>Complete genome sequence of enterohemorrhagic Escherichia coli O157:H7 and genomic comparison with a laboratory strain K-12.</title>
        <authorList>
            <person name="Hayashi T."/>
            <person name="Makino K."/>
            <person name="Ohnishi M."/>
            <person name="Kurokawa K."/>
            <person name="Ishii K."/>
            <person name="Yokoyama K."/>
            <person name="Han C.-G."/>
            <person name="Ohtsubo E."/>
            <person name="Nakayama K."/>
            <person name="Murata T."/>
            <person name="Tanaka M."/>
            <person name="Tobe T."/>
            <person name="Iida T."/>
            <person name="Takami H."/>
            <person name="Honda T."/>
            <person name="Sasakawa C."/>
            <person name="Ogasawara N."/>
            <person name="Yasunaga T."/>
            <person name="Kuhara S."/>
            <person name="Shiba T."/>
            <person name="Hattori M."/>
            <person name="Shinagawa H."/>
        </authorList>
    </citation>
    <scope>NUCLEOTIDE SEQUENCE [LARGE SCALE GENOMIC DNA]</scope>
    <source>
        <strain>O157:H7 / Sakai / RIMD 0509952 / EHEC</strain>
    </source>
</reference>
<accession>P64477</accession>
<accession>P76195</accession>
<comment type="sequence caution" evidence="1">
    <conflict type="erroneous initiation">
        <sequence resource="EMBL-CDS" id="AAG56672"/>
    </conflict>
    <text>Extended N-terminus.</text>
</comment>